<accession>B5FFA9</accession>
<gene>
    <name evidence="1" type="primary">yihI</name>
    <name type="ordered locus">VFMJ11_0076</name>
</gene>
<evidence type="ECO:0000255" key="1">
    <source>
        <dbReference type="HAMAP-Rule" id="MF_01058"/>
    </source>
</evidence>
<evidence type="ECO:0000256" key="2">
    <source>
        <dbReference type="SAM" id="MobiDB-lite"/>
    </source>
</evidence>
<protein>
    <recommendedName>
        <fullName evidence="1">Der GTPase-activating protein YihI</fullName>
    </recommendedName>
</protein>
<name>YIHI_ALIFM</name>
<feature type="chain" id="PRO_1000136395" description="Der GTPase-activating protein YihI">
    <location>
        <begin position="1"/>
        <end position="181"/>
    </location>
</feature>
<feature type="region of interest" description="Disordered" evidence="2">
    <location>
        <begin position="1"/>
        <end position="73"/>
    </location>
</feature>
<feature type="compositionally biased region" description="Basic and acidic residues" evidence="2">
    <location>
        <begin position="22"/>
        <end position="32"/>
    </location>
</feature>
<feature type="compositionally biased region" description="Basic residues" evidence="2">
    <location>
        <begin position="33"/>
        <end position="42"/>
    </location>
</feature>
<feature type="compositionally biased region" description="Basic and acidic residues" evidence="2">
    <location>
        <begin position="55"/>
        <end position="67"/>
    </location>
</feature>
<keyword id="KW-0343">GTPase activation</keyword>
<keyword id="KW-0690">Ribosome biogenesis</keyword>
<comment type="function">
    <text evidence="1">A GTPase-activating protein (GAP) that modifies Der/EngA GTPase function. May play a role in ribosome biogenesis.</text>
</comment>
<comment type="subunit">
    <text evidence="1">Interacts with Der.</text>
</comment>
<comment type="similarity">
    <text evidence="1">Belongs to the YihI family.</text>
</comment>
<sequence length="181" mass="20881">MSRIKKARKPGMSSQPVVVTRNRTDRDVESRELKRKRKRKGLKAGARNAESNAEQARRNAQKKDPRIGSKKPIQLVVDAKQKTTKQERRLTNEQELAMLENDAQLMVLLDRLDSGENLGTGLQKYVDEKLARIEHLMGRLGLLDDEEPEEIEEFPEFAERKAKSDDDLLAEFDDFNMDDFK</sequence>
<proteinExistence type="inferred from homology"/>
<dbReference type="EMBL" id="CP001139">
    <property type="protein sequence ID" value="ACH65074.1"/>
    <property type="molecule type" value="Genomic_DNA"/>
</dbReference>
<dbReference type="RefSeq" id="WP_005416931.1">
    <property type="nucleotide sequence ID" value="NC_011184.1"/>
</dbReference>
<dbReference type="SMR" id="B5FFA9"/>
<dbReference type="KEGG" id="vfm:VFMJ11_0076"/>
<dbReference type="HOGENOM" id="CLU_094104_1_0_6"/>
<dbReference type="Proteomes" id="UP000001857">
    <property type="component" value="Chromosome I"/>
</dbReference>
<dbReference type="GO" id="GO:0005096">
    <property type="term" value="F:GTPase activator activity"/>
    <property type="evidence" value="ECO:0007669"/>
    <property type="project" value="UniProtKB-KW"/>
</dbReference>
<dbReference type="GO" id="GO:0042254">
    <property type="term" value="P:ribosome biogenesis"/>
    <property type="evidence" value="ECO:0007669"/>
    <property type="project" value="UniProtKB-KW"/>
</dbReference>
<dbReference type="HAMAP" id="MF_01058">
    <property type="entry name" value="GAP_YihI"/>
    <property type="match status" value="1"/>
</dbReference>
<dbReference type="InterPro" id="IPR007336">
    <property type="entry name" value="YihI"/>
</dbReference>
<dbReference type="NCBIfam" id="NF003560">
    <property type="entry name" value="PRK05244.1-1"/>
    <property type="match status" value="1"/>
</dbReference>
<dbReference type="Pfam" id="PF04220">
    <property type="entry name" value="YihI"/>
    <property type="match status" value="1"/>
</dbReference>
<reference key="1">
    <citation type="submission" date="2008-08" db="EMBL/GenBank/DDBJ databases">
        <title>Complete sequence of Vibrio fischeri strain MJ11.</title>
        <authorList>
            <person name="Mandel M.J."/>
            <person name="Stabb E.V."/>
            <person name="Ruby E.G."/>
            <person name="Ferriera S."/>
            <person name="Johnson J."/>
            <person name="Kravitz S."/>
            <person name="Beeson K."/>
            <person name="Sutton G."/>
            <person name="Rogers Y.-H."/>
            <person name="Friedman R."/>
            <person name="Frazier M."/>
            <person name="Venter J.C."/>
        </authorList>
    </citation>
    <scope>NUCLEOTIDE SEQUENCE [LARGE SCALE GENOMIC DNA]</scope>
    <source>
        <strain>MJ11</strain>
    </source>
</reference>
<organism>
    <name type="scientific">Aliivibrio fischeri (strain MJ11)</name>
    <name type="common">Vibrio fischeri</name>
    <dbReference type="NCBI Taxonomy" id="388396"/>
    <lineage>
        <taxon>Bacteria</taxon>
        <taxon>Pseudomonadati</taxon>
        <taxon>Pseudomonadota</taxon>
        <taxon>Gammaproteobacteria</taxon>
        <taxon>Vibrionales</taxon>
        <taxon>Vibrionaceae</taxon>
        <taxon>Aliivibrio</taxon>
    </lineage>
</organism>